<proteinExistence type="inferred from homology"/>
<keyword id="KW-0030">Aminoacyl-tRNA synthetase</keyword>
<keyword id="KW-0067">ATP-binding</keyword>
<keyword id="KW-0963">Cytoplasm</keyword>
<keyword id="KW-0436">Ligase</keyword>
<keyword id="KW-0547">Nucleotide-binding</keyword>
<keyword id="KW-0648">Protein biosynthesis</keyword>
<organism>
    <name type="scientific">Vibrio campbellii (strain ATCC BAA-1116)</name>
    <dbReference type="NCBI Taxonomy" id="2902295"/>
    <lineage>
        <taxon>Bacteria</taxon>
        <taxon>Pseudomonadati</taxon>
        <taxon>Pseudomonadota</taxon>
        <taxon>Gammaproteobacteria</taxon>
        <taxon>Vibrionales</taxon>
        <taxon>Vibrionaceae</taxon>
        <taxon>Vibrio</taxon>
    </lineage>
</organism>
<sequence length="571" mass="63148">MRTSNYLLSTLKETPNDAEVVSHQLMLRAGMIRKLASGLYTWLPTGLRVLRKVENIVRQEIDNAGAVETLMPVVQPFELWEETGRSEKMGPELLRFTDRHTRPFVLSPTAEEVITSLVRNEVSSYKQLPLNLYQIQTKFRDERRPRFGVMRAREFCMMDAYSFDIDKEGLEKSYQAMHDAYCKAFDRMGLEYRPVLADSGAIGGSGSQEFHVLAESGEDLIAFSTESDYAANIEKAEAAAPAGERAEPTQEMTLVDTPNAKTIAELVEQHGLAIEKTVKTLFVKASDEVDADIIALIVRGDHELNEVKAENLPQVASPLEMATEEEMRALIGAGAGSLGPVGLELPFIVDRSVAVMSDFGAGANIDDKHYFGINWGRDVELGQVEDLRNVVEGDPSPCGQGTLMLKRGIEVGHIFQLGNVYSEAMNCGVLGPDGKNVILEMGCYGIGVSRVVASAIEQNHDKYGIIWPDALAPFQVAIVPMNMHKSEEVKEAAEKLYAELTAMGIEVLFDDRKERPGVMFSDMELIGIPHTIVIGDRSMKEGNFEYKNRRSGEKTAVAMADIVEHVKAQLQ</sequence>
<protein>
    <recommendedName>
        <fullName evidence="1">Proline--tRNA ligase</fullName>
        <ecNumber evidence="1">6.1.1.15</ecNumber>
    </recommendedName>
    <alternativeName>
        <fullName evidence="1">Prolyl-tRNA synthetase</fullName>
        <shortName evidence="1">ProRS</shortName>
    </alternativeName>
</protein>
<gene>
    <name evidence="1" type="primary">proS</name>
    <name type="ordered locus">VIBHAR_03253</name>
</gene>
<evidence type="ECO:0000255" key="1">
    <source>
        <dbReference type="HAMAP-Rule" id="MF_01569"/>
    </source>
</evidence>
<accession>A7N1W0</accession>
<feature type="chain" id="PRO_1000069173" description="Proline--tRNA ligase">
    <location>
        <begin position="1"/>
        <end position="571"/>
    </location>
</feature>
<reference key="1">
    <citation type="submission" date="2007-08" db="EMBL/GenBank/DDBJ databases">
        <authorList>
            <consortium name="The Vibrio harveyi Genome Sequencing Project"/>
            <person name="Bassler B."/>
            <person name="Clifton S.W."/>
            <person name="Fulton L."/>
            <person name="Delehaunty K."/>
            <person name="Fronick C."/>
            <person name="Harrison M."/>
            <person name="Markivic C."/>
            <person name="Fulton R."/>
            <person name="Tin-Wollam A.-M."/>
            <person name="Shah N."/>
            <person name="Pepin K."/>
            <person name="Nash W."/>
            <person name="Thiruvilangam P."/>
            <person name="Bhonagiri V."/>
            <person name="Waters C."/>
            <person name="Tu K.C."/>
            <person name="Irgon J."/>
            <person name="Wilson R.K."/>
        </authorList>
    </citation>
    <scope>NUCLEOTIDE SEQUENCE [LARGE SCALE GENOMIC DNA]</scope>
    <source>
        <strain>ATCC BAA-1116 / BB120</strain>
    </source>
</reference>
<name>SYP_VIBC1</name>
<comment type="function">
    <text evidence="1">Catalyzes the attachment of proline to tRNA(Pro) in a two-step reaction: proline is first activated by ATP to form Pro-AMP and then transferred to the acceptor end of tRNA(Pro). As ProRS can inadvertently accommodate and process non-cognate amino acids such as alanine and cysteine, to avoid such errors it has two additional distinct editing activities against alanine. One activity is designated as 'pretransfer' editing and involves the tRNA(Pro)-independent hydrolysis of activated Ala-AMP. The other activity is designated 'posttransfer' editing and involves deacylation of mischarged Ala-tRNA(Pro). The misacylated Cys-tRNA(Pro) is not edited by ProRS.</text>
</comment>
<comment type="catalytic activity">
    <reaction evidence="1">
        <text>tRNA(Pro) + L-proline + ATP = L-prolyl-tRNA(Pro) + AMP + diphosphate</text>
        <dbReference type="Rhea" id="RHEA:14305"/>
        <dbReference type="Rhea" id="RHEA-COMP:9700"/>
        <dbReference type="Rhea" id="RHEA-COMP:9702"/>
        <dbReference type="ChEBI" id="CHEBI:30616"/>
        <dbReference type="ChEBI" id="CHEBI:33019"/>
        <dbReference type="ChEBI" id="CHEBI:60039"/>
        <dbReference type="ChEBI" id="CHEBI:78442"/>
        <dbReference type="ChEBI" id="CHEBI:78532"/>
        <dbReference type="ChEBI" id="CHEBI:456215"/>
        <dbReference type="EC" id="6.1.1.15"/>
    </reaction>
</comment>
<comment type="subunit">
    <text evidence="1">Homodimer.</text>
</comment>
<comment type="subcellular location">
    <subcellularLocation>
        <location evidence="1">Cytoplasm</location>
    </subcellularLocation>
</comment>
<comment type="domain">
    <text evidence="1">Consists of three domains: the N-terminal catalytic domain, the editing domain and the C-terminal anticodon-binding domain.</text>
</comment>
<comment type="similarity">
    <text evidence="1">Belongs to the class-II aminoacyl-tRNA synthetase family. ProS type 1 subfamily.</text>
</comment>
<dbReference type="EC" id="6.1.1.15" evidence="1"/>
<dbReference type="EMBL" id="CP000789">
    <property type="protein sequence ID" value="ABU72201.1"/>
    <property type="molecule type" value="Genomic_DNA"/>
</dbReference>
<dbReference type="RefSeq" id="WP_012128708.1">
    <property type="nucleotide sequence ID" value="NC_009783.1"/>
</dbReference>
<dbReference type="SMR" id="A7N1W0"/>
<dbReference type="KEGG" id="vha:VIBHAR_03253"/>
<dbReference type="PATRIC" id="fig|338187.25.peg.2939"/>
<dbReference type="Proteomes" id="UP000008152">
    <property type="component" value="Chromosome I"/>
</dbReference>
<dbReference type="GO" id="GO:0005829">
    <property type="term" value="C:cytosol"/>
    <property type="evidence" value="ECO:0007669"/>
    <property type="project" value="TreeGrafter"/>
</dbReference>
<dbReference type="GO" id="GO:0002161">
    <property type="term" value="F:aminoacyl-tRNA deacylase activity"/>
    <property type="evidence" value="ECO:0007669"/>
    <property type="project" value="InterPro"/>
</dbReference>
<dbReference type="GO" id="GO:0005524">
    <property type="term" value="F:ATP binding"/>
    <property type="evidence" value="ECO:0007669"/>
    <property type="project" value="UniProtKB-UniRule"/>
</dbReference>
<dbReference type="GO" id="GO:0004827">
    <property type="term" value="F:proline-tRNA ligase activity"/>
    <property type="evidence" value="ECO:0007669"/>
    <property type="project" value="UniProtKB-UniRule"/>
</dbReference>
<dbReference type="GO" id="GO:0006433">
    <property type="term" value="P:prolyl-tRNA aminoacylation"/>
    <property type="evidence" value="ECO:0007669"/>
    <property type="project" value="UniProtKB-UniRule"/>
</dbReference>
<dbReference type="CDD" id="cd04334">
    <property type="entry name" value="ProRS-INS"/>
    <property type="match status" value="1"/>
</dbReference>
<dbReference type="CDD" id="cd00861">
    <property type="entry name" value="ProRS_anticodon_short"/>
    <property type="match status" value="1"/>
</dbReference>
<dbReference type="CDD" id="cd00779">
    <property type="entry name" value="ProRS_core_prok"/>
    <property type="match status" value="1"/>
</dbReference>
<dbReference type="FunFam" id="3.30.930.10:FF:000015">
    <property type="entry name" value="Proline--tRNA ligase"/>
    <property type="match status" value="1"/>
</dbReference>
<dbReference type="FunFam" id="3.30.930.10:FF:000043">
    <property type="entry name" value="Proline--tRNA ligase"/>
    <property type="match status" value="1"/>
</dbReference>
<dbReference type="FunFam" id="3.40.50.800:FF:000006">
    <property type="entry name" value="Proline--tRNA ligase"/>
    <property type="match status" value="1"/>
</dbReference>
<dbReference type="FunFam" id="3.90.960.10:FF:000001">
    <property type="entry name" value="Proline--tRNA ligase"/>
    <property type="match status" value="1"/>
</dbReference>
<dbReference type="Gene3D" id="3.40.50.800">
    <property type="entry name" value="Anticodon-binding domain"/>
    <property type="match status" value="1"/>
</dbReference>
<dbReference type="Gene3D" id="3.30.930.10">
    <property type="entry name" value="Bira Bifunctional Protein, Domain 2"/>
    <property type="match status" value="2"/>
</dbReference>
<dbReference type="Gene3D" id="3.90.960.10">
    <property type="entry name" value="YbaK/aminoacyl-tRNA synthetase-associated domain"/>
    <property type="match status" value="1"/>
</dbReference>
<dbReference type="HAMAP" id="MF_01569">
    <property type="entry name" value="Pro_tRNA_synth_type1"/>
    <property type="match status" value="1"/>
</dbReference>
<dbReference type="InterPro" id="IPR002314">
    <property type="entry name" value="aa-tRNA-synt_IIb"/>
</dbReference>
<dbReference type="InterPro" id="IPR006195">
    <property type="entry name" value="aa-tRNA-synth_II"/>
</dbReference>
<dbReference type="InterPro" id="IPR045864">
    <property type="entry name" value="aa-tRNA-synth_II/BPL/LPL"/>
</dbReference>
<dbReference type="InterPro" id="IPR004154">
    <property type="entry name" value="Anticodon-bd"/>
</dbReference>
<dbReference type="InterPro" id="IPR036621">
    <property type="entry name" value="Anticodon-bd_dom_sf"/>
</dbReference>
<dbReference type="InterPro" id="IPR002316">
    <property type="entry name" value="Pro-tRNA-ligase_IIa"/>
</dbReference>
<dbReference type="InterPro" id="IPR004500">
    <property type="entry name" value="Pro-tRNA-synth_IIa_bac-type"/>
</dbReference>
<dbReference type="InterPro" id="IPR023717">
    <property type="entry name" value="Pro-tRNA-Synthase_IIa_type1"/>
</dbReference>
<dbReference type="InterPro" id="IPR050062">
    <property type="entry name" value="Pro-tRNA_synthetase"/>
</dbReference>
<dbReference type="InterPro" id="IPR044140">
    <property type="entry name" value="ProRS_anticodon_short"/>
</dbReference>
<dbReference type="InterPro" id="IPR033730">
    <property type="entry name" value="ProRS_core_prok"/>
</dbReference>
<dbReference type="InterPro" id="IPR036754">
    <property type="entry name" value="YbaK/aa-tRNA-synt-asso_dom_sf"/>
</dbReference>
<dbReference type="InterPro" id="IPR007214">
    <property type="entry name" value="YbaK/aa-tRNA-synth-assoc-dom"/>
</dbReference>
<dbReference type="NCBIfam" id="NF006625">
    <property type="entry name" value="PRK09194.1"/>
    <property type="match status" value="1"/>
</dbReference>
<dbReference type="NCBIfam" id="TIGR00409">
    <property type="entry name" value="proS_fam_II"/>
    <property type="match status" value="1"/>
</dbReference>
<dbReference type="PANTHER" id="PTHR42753">
    <property type="entry name" value="MITOCHONDRIAL RIBOSOME PROTEIN L39/PROLYL-TRNA LIGASE FAMILY MEMBER"/>
    <property type="match status" value="1"/>
</dbReference>
<dbReference type="PANTHER" id="PTHR42753:SF2">
    <property type="entry name" value="PROLINE--TRNA LIGASE"/>
    <property type="match status" value="1"/>
</dbReference>
<dbReference type="Pfam" id="PF03129">
    <property type="entry name" value="HGTP_anticodon"/>
    <property type="match status" value="1"/>
</dbReference>
<dbReference type="Pfam" id="PF00587">
    <property type="entry name" value="tRNA-synt_2b"/>
    <property type="match status" value="1"/>
</dbReference>
<dbReference type="Pfam" id="PF04073">
    <property type="entry name" value="tRNA_edit"/>
    <property type="match status" value="1"/>
</dbReference>
<dbReference type="PIRSF" id="PIRSF001535">
    <property type="entry name" value="ProRS_1"/>
    <property type="match status" value="1"/>
</dbReference>
<dbReference type="PRINTS" id="PR01046">
    <property type="entry name" value="TRNASYNTHPRO"/>
</dbReference>
<dbReference type="SUPFAM" id="SSF52954">
    <property type="entry name" value="Class II aaRS ABD-related"/>
    <property type="match status" value="1"/>
</dbReference>
<dbReference type="SUPFAM" id="SSF55681">
    <property type="entry name" value="Class II aaRS and biotin synthetases"/>
    <property type="match status" value="1"/>
</dbReference>
<dbReference type="SUPFAM" id="SSF55826">
    <property type="entry name" value="YbaK/ProRS associated domain"/>
    <property type="match status" value="1"/>
</dbReference>
<dbReference type="PROSITE" id="PS50862">
    <property type="entry name" value="AA_TRNA_LIGASE_II"/>
    <property type="match status" value="1"/>
</dbReference>